<evidence type="ECO:0000255" key="1">
    <source>
        <dbReference type="HAMAP-Rule" id="MF_00207"/>
    </source>
</evidence>
<evidence type="ECO:0000305" key="2"/>
<feature type="chain" id="PRO_0000158583" description="Probable manganese-dependent inorganic pyrophosphatase">
    <location>
        <begin position="1"/>
        <end position="309"/>
    </location>
</feature>
<feature type="binding site" evidence="1">
    <location>
        <position position="9"/>
    </location>
    <ligand>
        <name>Mn(2+)</name>
        <dbReference type="ChEBI" id="CHEBI:29035"/>
        <label>1</label>
    </ligand>
</feature>
<feature type="binding site" evidence="1">
    <location>
        <position position="13"/>
    </location>
    <ligand>
        <name>Mn(2+)</name>
        <dbReference type="ChEBI" id="CHEBI:29035"/>
        <label>1</label>
    </ligand>
</feature>
<feature type="binding site" evidence="1">
    <location>
        <position position="15"/>
    </location>
    <ligand>
        <name>Mn(2+)</name>
        <dbReference type="ChEBI" id="CHEBI:29035"/>
        <label>2</label>
    </ligand>
</feature>
<feature type="binding site" evidence="1">
    <location>
        <position position="75"/>
    </location>
    <ligand>
        <name>Mn(2+)</name>
        <dbReference type="ChEBI" id="CHEBI:29035"/>
        <label>1</label>
    </ligand>
</feature>
<feature type="binding site" evidence="1">
    <location>
        <position position="75"/>
    </location>
    <ligand>
        <name>Mn(2+)</name>
        <dbReference type="ChEBI" id="CHEBI:29035"/>
        <label>2</label>
    </ligand>
</feature>
<feature type="binding site" evidence="1">
    <location>
        <position position="97"/>
    </location>
    <ligand>
        <name>Mn(2+)</name>
        <dbReference type="ChEBI" id="CHEBI:29035"/>
        <label>2</label>
    </ligand>
</feature>
<feature type="binding site" evidence="1">
    <location>
        <position position="149"/>
    </location>
    <ligand>
        <name>Mn(2+)</name>
        <dbReference type="ChEBI" id="CHEBI:29035"/>
        <label>2</label>
    </ligand>
</feature>
<organism>
    <name type="scientific">Staphylococcus aureus (strain MSSA476)</name>
    <dbReference type="NCBI Taxonomy" id="282459"/>
    <lineage>
        <taxon>Bacteria</taxon>
        <taxon>Bacillati</taxon>
        <taxon>Bacillota</taxon>
        <taxon>Bacilli</taxon>
        <taxon>Bacillales</taxon>
        <taxon>Staphylococcaceae</taxon>
        <taxon>Staphylococcus</taxon>
    </lineage>
</organism>
<proteinExistence type="inferred from homology"/>
<gene>
    <name evidence="1" type="primary">ppaC</name>
    <name type="ordered locus">SAS1843</name>
</gene>
<name>PPAC_STAAS</name>
<keyword id="KW-0963">Cytoplasm</keyword>
<keyword id="KW-0378">Hydrolase</keyword>
<keyword id="KW-0464">Manganese</keyword>
<keyword id="KW-0479">Metal-binding</keyword>
<sequence>MAKTYIFGHKNPDTDAISSAIIMAEFEQLRGNSGAKAYRLGDVSAETQFALDTFNVPAPELLTDDLDGQDVILVDHNEFQQSSDTIASATIKHVIDHHRIANFETAGPLCYRAEPVGCTATILYKMFRERGFEIKPEIAGLMLSAIISDSLLFKSPTCTQQDVKAAEELKDIAKVDIQKYGLDMLKAGASTTDKSVEFLLNMDAKSFTMGDYVTRIAQVNAVDLDEVLNRKEDLEKEMLAVSAQEKYDLFVLVVTDIINSDSKILVVGAEKDKVGEAFNVQLEDDMAFLSGVVSRKKQIVPQITEALTK</sequence>
<comment type="catalytic activity">
    <reaction evidence="1">
        <text>diphosphate + H2O = 2 phosphate + H(+)</text>
        <dbReference type="Rhea" id="RHEA:24576"/>
        <dbReference type="ChEBI" id="CHEBI:15377"/>
        <dbReference type="ChEBI" id="CHEBI:15378"/>
        <dbReference type="ChEBI" id="CHEBI:33019"/>
        <dbReference type="ChEBI" id="CHEBI:43474"/>
        <dbReference type="EC" id="3.6.1.1"/>
    </reaction>
</comment>
<comment type="cofactor">
    <cofactor evidence="1">
        <name>Mn(2+)</name>
        <dbReference type="ChEBI" id="CHEBI:29035"/>
    </cofactor>
    <text evidence="1">Binds 2 manganese ions per subunit.</text>
</comment>
<comment type="subcellular location">
    <subcellularLocation>
        <location evidence="1">Cytoplasm</location>
    </subcellularLocation>
</comment>
<comment type="similarity">
    <text evidence="1">Belongs to the PPase class C family.</text>
</comment>
<comment type="sequence caution" evidence="2">
    <conflict type="erroneous initiation">
        <sequence resource="EMBL-CDS" id="CAG43648"/>
    </conflict>
</comment>
<dbReference type="EC" id="3.6.1.1" evidence="1"/>
<dbReference type="EMBL" id="BX571857">
    <property type="protein sequence ID" value="CAG43648.1"/>
    <property type="status" value="ALT_INIT"/>
    <property type="molecule type" value="Genomic_DNA"/>
</dbReference>
<dbReference type="RefSeq" id="WP_001140871.1">
    <property type="nucleotide sequence ID" value="NC_002953.3"/>
</dbReference>
<dbReference type="SMR" id="Q6G813"/>
<dbReference type="KEGG" id="sas:SAS1843"/>
<dbReference type="HOGENOM" id="CLU_025243_0_1_9"/>
<dbReference type="GO" id="GO:0005737">
    <property type="term" value="C:cytoplasm"/>
    <property type="evidence" value="ECO:0007669"/>
    <property type="project" value="UniProtKB-SubCell"/>
</dbReference>
<dbReference type="GO" id="GO:0004427">
    <property type="term" value="F:inorganic diphosphate phosphatase activity"/>
    <property type="evidence" value="ECO:0007669"/>
    <property type="project" value="UniProtKB-UniRule"/>
</dbReference>
<dbReference type="GO" id="GO:0030145">
    <property type="term" value="F:manganese ion binding"/>
    <property type="evidence" value="ECO:0007669"/>
    <property type="project" value="UniProtKB-UniRule"/>
</dbReference>
<dbReference type="FunFam" id="3.10.310.20:FF:000001">
    <property type="entry name" value="Probable manganese-dependent inorganic pyrophosphatase"/>
    <property type="match status" value="1"/>
</dbReference>
<dbReference type="FunFam" id="3.90.1640.10:FF:000001">
    <property type="entry name" value="Probable manganese-dependent inorganic pyrophosphatase"/>
    <property type="match status" value="1"/>
</dbReference>
<dbReference type="Gene3D" id="3.10.310.20">
    <property type="entry name" value="DHHA2 domain"/>
    <property type="match status" value="1"/>
</dbReference>
<dbReference type="Gene3D" id="3.90.1640.10">
    <property type="entry name" value="inorganic pyrophosphatase (n-terminal core)"/>
    <property type="match status" value="1"/>
</dbReference>
<dbReference type="HAMAP" id="MF_00207">
    <property type="entry name" value="PPase_C"/>
    <property type="match status" value="1"/>
</dbReference>
<dbReference type="InterPro" id="IPR001667">
    <property type="entry name" value="DDH_dom"/>
</dbReference>
<dbReference type="InterPro" id="IPR038763">
    <property type="entry name" value="DHH_sf"/>
</dbReference>
<dbReference type="InterPro" id="IPR004097">
    <property type="entry name" value="DHHA2"/>
</dbReference>
<dbReference type="InterPro" id="IPR038222">
    <property type="entry name" value="DHHA2_dom_sf"/>
</dbReference>
<dbReference type="InterPro" id="IPR022934">
    <property type="entry name" value="Mn-dep_inorganic_PyrPase"/>
</dbReference>
<dbReference type="NCBIfam" id="NF003877">
    <property type="entry name" value="PRK05427.1"/>
    <property type="match status" value="1"/>
</dbReference>
<dbReference type="PANTHER" id="PTHR12112">
    <property type="entry name" value="BNIP - RELATED"/>
    <property type="match status" value="1"/>
</dbReference>
<dbReference type="PANTHER" id="PTHR12112:SF22">
    <property type="entry name" value="MANGANESE-DEPENDENT INORGANIC PYROPHOSPHATASE-RELATED"/>
    <property type="match status" value="1"/>
</dbReference>
<dbReference type="Pfam" id="PF01368">
    <property type="entry name" value="DHH"/>
    <property type="match status" value="1"/>
</dbReference>
<dbReference type="Pfam" id="PF02833">
    <property type="entry name" value="DHHA2"/>
    <property type="match status" value="1"/>
</dbReference>
<dbReference type="SMART" id="SM01131">
    <property type="entry name" value="DHHA2"/>
    <property type="match status" value="1"/>
</dbReference>
<dbReference type="SUPFAM" id="SSF64182">
    <property type="entry name" value="DHH phosphoesterases"/>
    <property type="match status" value="1"/>
</dbReference>
<accession>Q6G813</accession>
<reference key="1">
    <citation type="journal article" date="2004" name="Proc. Natl. Acad. Sci. U.S.A.">
        <title>Complete genomes of two clinical Staphylococcus aureus strains: evidence for the rapid evolution of virulence and drug resistance.</title>
        <authorList>
            <person name="Holden M.T.G."/>
            <person name="Feil E.J."/>
            <person name="Lindsay J.A."/>
            <person name="Peacock S.J."/>
            <person name="Day N.P.J."/>
            <person name="Enright M.C."/>
            <person name="Foster T.J."/>
            <person name="Moore C.E."/>
            <person name="Hurst L."/>
            <person name="Atkin R."/>
            <person name="Barron A."/>
            <person name="Bason N."/>
            <person name="Bentley S.D."/>
            <person name="Chillingworth C."/>
            <person name="Chillingworth T."/>
            <person name="Churcher C."/>
            <person name="Clark L."/>
            <person name="Corton C."/>
            <person name="Cronin A."/>
            <person name="Doggett J."/>
            <person name="Dowd L."/>
            <person name="Feltwell T."/>
            <person name="Hance Z."/>
            <person name="Harris B."/>
            <person name="Hauser H."/>
            <person name="Holroyd S."/>
            <person name="Jagels K."/>
            <person name="James K.D."/>
            <person name="Lennard N."/>
            <person name="Line A."/>
            <person name="Mayes R."/>
            <person name="Moule S."/>
            <person name="Mungall K."/>
            <person name="Ormond D."/>
            <person name="Quail M.A."/>
            <person name="Rabbinowitsch E."/>
            <person name="Rutherford K.M."/>
            <person name="Sanders M."/>
            <person name="Sharp S."/>
            <person name="Simmonds M."/>
            <person name="Stevens K."/>
            <person name="Whitehead S."/>
            <person name="Barrell B.G."/>
            <person name="Spratt B.G."/>
            <person name="Parkhill J."/>
        </authorList>
    </citation>
    <scope>NUCLEOTIDE SEQUENCE [LARGE SCALE GENOMIC DNA]</scope>
    <source>
        <strain>MSSA476</strain>
    </source>
</reference>
<protein>
    <recommendedName>
        <fullName evidence="1">Probable manganese-dependent inorganic pyrophosphatase</fullName>
        <ecNumber evidence="1">3.6.1.1</ecNumber>
    </recommendedName>
    <alternativeName>
        <fullName evidence="1">Pyrophosphate phospho-hydrolase</fullName>
        <shortName evidence="1">PPase</shortName>
    </alternativeName>
</protein>